<dbReference type="SMR" id="P60259"/>
<dbReference type="GO" id="GO:0005576">
    <property type="term" value="C:extracellular region"/>
    <property type="evidence" value="ECO:0007669"/>
    <property type="project" value="UniProtKB-SubCell"/>
</dbReference>
<dbReference type="GO" id="GO:0019871">
    <property type="term" value="F:sodium channel inhibitor activity"/>
    <property type="evidence" value="ECO:0007669"/>
    <property type="project" value="InterPro"/>
</dbReference>
<dbReference type="GO" id="GO:0090729">
    <property type="term" value="F:toxin activity"/>
    <property type="evidence" value="ECO:0007669"/>
    <property type="project" value="UniProtKB-KW"/>
</dbReference>
<dbReference type="GO" id="GO:0006952">
    <property type="term" value="P:defense response"/>
    <property type="evidence" value="ECO:0007669"/>
    <property type="project" value="InterPro"/>
</dbReference>
<dbReference type="CDD" id="cd23106">
    <property type="entry name" value="neurotoxins_LC_scorpion"/>
    <property type="match status" value="1"/>
</dbReference>
<dbReference type="Gene3D" id="3.30.30.10">
    <property type="entry name" value="Knottin, scorpion toxin-like"/>
    <property type="match status" value="1"/>
</dbReference>
<dbReference type="InterPro" id="IPR044062">
    <property type="entry name" value="LCN-type_CS_alpha_beta_dom"/>
</dbReference>
<dbReference type="InterPro" id="IPR003614">
    <property type="entry name" value="Scorpion_toxin-like"/>
</dbReference>
<dbReference type="InterPro" id="IPR036574">
    <property type="entry name" value="Scorpion_toxin-like_sf"/>
</dbReference>
<dbReference type="InterPro" id="IPR018218">
    <property type="entry name" value="Scorpion_toxinL"/>
</dbReference>
<dbReference type="InterPro" id="IPR002061">
    <property type="entry name" value="Scorpion_toxinL/defensin"/>
</dbReference>
<dbReference type="Pfam" id="PF00537">
    <property type="entry name" value="Toxin_3"/>
    <property type="match status" value="1"/>
</dbReference>
<dbReference type="PRINTS" id="PR00285">
    <property type="entry name" value="SCORPNTOXIN"/>
</dbReference>
<dbReference type="SMART" id="SM00505">
    <property type="entry name" value="Knot1"/>
    <property type="match status" value="1"/>
</dbReference>
<dbReference type="SUPFAM" id="SSF57095">
    <property type="entry name" value="Scorpion toxin-like"/>
    <property type="match status" value="1"/>
</dbReference>
<dbReference type="PROSITE" id="PS51863">
    <property type="entry name" value="LCN_CSAB"/>
    <property type="match status" value="1"/>
</dbReference>
<sequence length="66" mass="7267">VRDAYIAQNYNCVYACARDAYCNDLCTKNGARSGLFATFGPHGDACWCIALPNNVPLKVQGKCHRK</sequence>
<reference key="1">
    <citation type="journal article" date="1999" name="J. Mol. Evol.">
        <title>Dynamic diversification from a putative common ancestor of scorpion toxins affecting sodium, potassium, and chloride channels.</title>
        <authorList>
            <person name="Froy O."/>
            <person name="Sagiv T."/>
            <person name="Poreh M."/>
            <person name="Urbach D."/>
            <person name="Zilberberg N."/>
            <person name="Gurevitz M."/>
        </authorList>
    </citation>
    <scope>NUCLEOTIDE SEQUENCE [GENOMIC DNA]</scope>
    <source>
        <tissue>Single abdominal segment</tissue>
    </source>
</reference>
<organism>
    <name type="scientific">Buthus occitanus mardochei</name>
    <name type="common">Moroccan scorpion</name>
    <name type="synonym">Buthus mardochei</name>
    <dbReference type="NCBI Taxonomy" id="6869"/>
    <lineage>
        <taxon>Eukaryota</taxon>
        <taxon>Metazoa</taxon>
        <taxon>Ecdysozoa</taxon>
        <taxon>Arthropoda</taxon>
        <taxon>Chelicerata</taxon>
        <taxon>Arachnida</taxon>
        <taxon>Scorpiones</taxon>
        <taxon>Buthida</taxon>
        <taxon>Buthoidea</taxon>
        <taxon>Buthidae</taxon>
        <taxon>Buthus</taxon>
    </lineage>
</organism>
<evidence type="ECO:0000250" key="1"/>
<evidence type="ECO:0000255" key="2">
    <source>
        <dbReference type="PROSITE-ProRule" id="PRU01210"/>
    </source>
</evidence>
<evidence type="ECO:0000305" key="3"/>
<comment type="function">
    <text evidence="1">Binds voltage-independently at site-3 of sodium channels (Nav) and inhibits the inactivation of the activated channels, thereby blocking neuronal transmission.</text>
</comment>
<comment type="subcellular location">
    <subcellularLocation>
        <location>Secreted</location>
    </subcellularLocation>
</comment>
<comment type="tissue specificity">
    <text>Expressed by the venom gland.</text>
</comment>
<comment type="domain">
    <text evidence="3">Has the structural arrangement of an alpha-helix connected to antiparallel beta-sheets by disulfide bonds (CS-alpha/beta).</text>
</comment>
<comment type="PTM">
    <text evidence="3">Only three disulfide bridges can be formed, because only seven cysteines are present.</text>
</comment>
<comment type="similarity">
    <text evidence="3">Belongs to the long (3 C-C) scorpion toxin superfamily.</text>
</comment>
<keyword id="KW-1015">Disulfide bond</keyword>
<keyword id="KW-0872">Ion channel impairing toxin</keyword>
<keyword id="KW-0528">Neurotoxin</keyword>
<keyword id="KW-0964">Secreted</keyword>
<keyword id="KW-0800">Toxin</keyword>
<keyword id="KW-0738">Voltage-gated sodium channel impairing toxin</keyword>
<name>SCXE_BUTOM</name>
<feature type="chain" id="PRO_0000066743" description="Toxin Boma6e">
    <location>
        <begin position="1"/>
        <end position="66"/>
    </location>
</feature>
<feature type="domain" description="LCN-type CS-alpha/beta" evidence="2">
    <location>
        <begin position="2"/>
        <end position="64"/>
    </location>
</feature>
<feature type="disulfide bond" evidence="2">
    <location>
        <begin position="12"/>
        <end position="63"/>
    </location>
</feature>
<feature type="disulfide bond" evidence="2">
    <location>
        <begin position="22"/>
        <end position="46"/>
    </location>
</feature>
<feature type="disulfide bond" evidence="2">
    <location>
        <begin position="26"/>
        <end position="48"/>
    </location>
</feature>
<accession>P60259</accession>
<proteinExistence type="inferred from homology"/>
<protein>
    <recommendedName>
        <fullName>Toxin Boma6e</fullName>
    </recommendedName>
    <alternativeName>
        <fullName>Alpha-neurotoxin Bom alpha-6e</fullName>
    </alternativeName>
</protein>